<protein>
    <recommendedName>
        <fullName>Putative cysteine--tRNA ligase 2</fullName>
        <ecNumber>6.1.1.16</ecNumber>
    </recommendedName>
    <alternativeName>
        <fullName>Cysteinyl-tRNA synthetase 2</fullName>
        <shortName>CysRS 2</shortName>
    </alternativeName>
</protein>
<name>SYC2_TROWT</name>
<sequence length="450" mass="51274">MYTFEVFDSRTRSIVKLEDCLLRLYVCGITPYKSTHLGHAFTYVGFDTLFRLALDSGRDVLYIQNISDIDEPLFQYAEKVGIHYKDLARTQTKRFFEDMHTLECLPPGYVIPVSKVLDGIKTGIEGLISRNMAYKLPNGDVYFDSTLTDPGKMFCFDRKTAMSLMLETDTGKNPFDPLLWRGRGAEPQWEASFGAGRPAWHISCAVLSNLQTQYENVLHIYGGGRDLAFPHHEFTNVLSKLIRAPKDNKQQDTVQDVFMHTGLVSYMGDKMSKSKGNLVFISQLREQCEKIGLHHSVIRLALLQRHYREDWEWQDECLDRAASRFRLWKSALQEYIGAKGIRSTADQNKGTQGAWERIHGGVFDSNFDHRQPIHPKHSPQMRDYSEHGSAGQNGTDLDLSLYQAIRFHLCNDLDTPKALDAVDSYARKGTITIPEARAVEKLLGIPLTRV</sequence>
<feature type="chain" id="PRO_0000159515" description="Putative cysteine--tRNA ligase 2">
    <location>
        <begin position="1"/>
        <end position="450"/>
    </location>
</feature>
<feature type="region of interest" description="Disordered" evidence="2">
    <location>
        <begin position="372"/>
        <end position="392"/>
    </location>
</feature>
<feature type="short sequence motif" description="'HIGH' region">
    <location>
        <begin position="29"/>
        <end position="39"/>
    </location>
</feature>
<feature type="short sequence motif" description="'KMSKS' region">
    <location>
        <begin position="270"/>
        <end position="274"/>
    </location>
</feature>
<feature type="binding site" evidence="1">
    <location>
        <position position="273"/>
    </location>
    <ligand>
        <name>ATP</name>
        <dbReference type="ChEBI" id="CHEBI:30616"/>
    </ligand>
</feature>
<keyword id="KW-0030">Aminoacyl-tRNA synthetase</keyword>
<keyword id="KW-0067">ATP-binding</keyword>
<keyword id="KW-0963">Cytoplasm</keyword>
<keyword id="KW-0436">Ligase</keyword>
<keyword id="KW-0547">Nucleotide-binding</keyword>
<keyword id="KW-0648">Protein biosynthesis</keyword>
<keyword id="KW-1185">Reference proteome</keyword>
<organism>
    <name type="scientific">Tropheryma whipplei (strain Twist)</name>
    <name type="common">Whipple's bacillus</name>
    <dbReference type="NCBI Taxonomy" id="203267"/>
    <lineage>
        <taxon>Bacteria</taxon>
        <taxon>Bacillati</taxon>
        <taxon>Actinomycetota</taxon>
        <taxon>Actinomycetes</taxon>
        <taxon>Micrococcales</taxon>
        <taxon>Tropherymataceae</taxon>
        <taxon>Tropheryma</taxon>
    </lineage>
</organism>
<dbReference type="EC" id="6.1.1.16"/>
<dbReference type="EMBL" id="AE014184">
    <property type="protein sequence ID" value="AAO44413.1"/>
    <property type="molecule type" value="Genomic_DNA"/>
</dbReference>
<dbReference type="RefSeq" id="WP_011096404.1">
    <property type="nucleotide sequence ID" value="NC_004572.3"/>
</dbReference>
<dbReference type="SMR" id="Q83GH3"/>
<dbReference type="STRING" id="203267.TWT_316"/>
<dbReference type="KEGG" id="twh:TWT_316"/>
<dbReference type="eggNOG" id="COG0215">
    <property type="taxonomic scope" value="Bacteria"/>
</dbReference>
<dbReference type="HOGENOM" id="CLU_013528_0_0_11"/>
<dbReference type="OrthoDB" id="9815130at2"/>
<dbReference type="Proteomes" id="UP000002200">
    <property type="component" value="Chromosome"/>
</dbReference>
<dbReference type="GO" id="GO:0005829">
    <property type="term" value="C:cytosol"/>
    <property type="evidence" value="ECO:0007669"/>
    <property type="project" value="TreeGrafter"/>
</dbReference>
<dbReference type="GO" id="GO:0005524">
    <property type="term" value="F:ATP binding"/>
    <property type="evidence" value="ECO:0007669"/>
    <property type="project" value="UniProtKB-KW"/>
</dbReference>
<dbReference type="GO" id="GO:0004817">
    <property type="term" value="F:cysteine-tRNA ligase activity"/>
    <property type="evidence" value="ECO:0007669"/>
    <property type="project" value="UniProtKB-EC"/>
</dbReference>
<dbReference type="GO" id="GO:0006423">
    <property type="term" value="P:cysteinyl-tRNA aminoacylation"/>
    <property type="evidence" value="ECO:0007669"/>
    <property type="project" value="TreeGrafter"/>
</dbReference>
<dbReference type="Gene3D" id="1.20.120.640">
    <property type="entry name" value="Anticodon-binding domain of a subclass of class I aminoacyl-tRNA synthetases"/>
    <property type="match status" value="1"/>
</dbReference>
<dbReference type="Gene3D" id="3.40.50.620">
    <property type="entry name" value="HUPs"/>
    <property type="match status" value="1"/>
</dbReference>
<dbReference type="InterPro" id="IPR024909">
    <property type="entry name" value="Cys-tRNA/MSH_ligase"/>
</dbReference>
<dbReference type="InterPro" id="IPR014729">
    <property type="entry name" value="Rossmann-like_a/b/a_fold"/>
</dbReference>
<dbReference type="InterPro" id="IPR032678">
    <property type="entry name" value="tRNA-synt_1_cat_dom"/>
</dbReference>
<dbReference type="PANTHER" id="PTHR10890:SF3">
    <property type="entry name" value="CYSTEINE--TRNA LIGASE, CYTOPLASMIC"/>
    <property type="match status" value="1"/>
</dbReference>
<dbReference type="PANTHER" id="PTHR10890">
    <property type="entry name" value="CYSTEINYL-TRNA SYNTHETASE"/>
    <property type="match status" value="1"/>
</dbReference>
<dbReference type="Pfam" id="PF01406">
    <property type="entry name" value="tRNA-synt_1e"/>
    <property type="match status" value="1"/>
</dbReference>
<dbReference type="PRINTS" id="PR00983">
    <property type="entry name" value="TRNASYNTHCYS"/>
</dbReference>
<dbReference type="SUPFAM" id="SSF52374">
    <property type="entry name" value="Nucleotidylyl transferase"/>
    <property type="match status" value="1"/>
</dbReference>
<comment type="catalytic activity">
    <reaction>
        <text>tRNA(Cys) + L-cysteine + ATP = L-cysteinyl-tRNA(Cys) + AMP + diphosphate</text>
        <dbReference type="Rhea" id="RHEA:17773"/>
        <dbReference type="Rhea" id="RHEA-COMP:9661"/>
        <dbReference type="Rhea" id="RHEA-COMP:9679"/>
        <dbReference type="ChEBI" id="CHEBI:30616"/>
        <dbReference type="ChEBI" id="CHEBI:33019"/>
        <dbReference type="ChEBI" id="CHEBI:35235"/>
        <dbReference type="ChEBI" id="CHEBI:78442"/>
        <dbReference type="ChEBI" id="CHEBI:78517"/>
        <dbReference type="ChEBI" id="CHEBI:456215"/>
        <dbReference type="EC" id="6.1.1.16"/>
    </reaction>
</comment>
<comment type="subunit">
    <text evidence="1">Monomer.</text>
</comment>
<comment type="subcellular location">
    <subcellularLocation>
        <location evidence="1">Cytoplasm</location>
    </subcellularLocation>
</comment>
<comment type="similarity">
    <text evidence="3">Belongs to the class-I aminoacyl-tRNA synthetase family.</text>
</comment>
<reference key="1">
    <citation type="journal article" date="2003" name="Genome Res.">
        <title>Tropheryma whipplei twist: a human pathogenic Actinobacteria with a reduced genome.</title>
        <authorList>
            <person name="Raoult D."/>
            <person name="Ogata H."/>
            <person name="Audic S."/>
            <person name="Robert C."/>
            <person name="Suhre K."/>
            <person name="Drancourt M."/>
            <person name="Claverie J.-M."/>
        </authorList>
    </citation>
    <scope>NUCLEOTIDE SEQUENCE [LARGE SCALE GENOMIC DNA]</scope>
    <source>
        <strain>Twist</strain>
    </source>
</reference>
<proteinExistence type="inferred from homology"/>
<evidence type="ECO:0000250" key="1"/>
<evidence type="ECO:0000256" key="2">
    <source>
        <dbReference type="SAM" id="MobiDB-lite"/>
    </source>
</evidence>
<evidence type="ECO:0000305" key="3"/>
<gene>
    <name type="primary">cysS2</name>
    <name type="ordered locus">TWT_316</name>
</gene>
<accession>Q83GH3</accession>